<sequence>MAKLHDYYKSSVVAELTKEFSYSSVMQVPRVEKITLNMGVGEAINDKKLLENAAADMAIISGQKPLITKARKSVAGFKIREGYPIGCKVTLRGERMWEFLERLVSIALPRVRDFRGVSAKSFDGRGNYSMGVREQIIFPEIDYDKVDRVRGLDITITTSANTDAEGRALLAAFNFPFRK</sequence>
<feature type="chain" id="PRO_1000142347" description="Large ribosomal subunit protein uL5">
    <location>
        <begin position="1"/>
        <end position="179"/>
    </location>
</feature>
<protein>
    <recommendedName>
        <fullName evidence="1">Large ribosomal subunit protein uL5</fullName>
    </recommendedName>
    <alternativeName>
        <fullName evidence="2">50S ribosomal protein L5</fullName>
    </alternativeName>
</protein>
<evidence type="ECO:0000255" key="1">
    <source>
        <dbReference type="HAMAP-Rule" id="MF_01333"/>
    </source>
</evidence>
<evidence type="ECO:0000305" key="2"/>
<proteinExistence type="inferred from homology"/>
<accession>B6EPT7</accession>
<name>RL5_ALISL</name>
<gene>
    <name evidence="1" type="primary">rplE</name>
    <name type="ordered locus">VSAL_I0332</name>
</gene>
<comment type="function">
    <text evidence="1">This is one of the proteins that bind and probably mediate the attachment of the 5S RNA into the large ribosomal subunit, where it forms part of the central protuberance. In the 70S ribosome it contacts protein S13 of the 30S subunit (bridge B1b), connecting the 2 subunits; this bridge is implicated in subunit movement. Contacts the P site tRNA; the 5S rRNA and some of its associated proteins might help stabilize positioning of ribosome-bound tRNAs.</text>
</comment>
<comment type="subunit">
    <text evidence="1">Part of the 50S ribosomal subunit; part of the 5S rRNA/L5/L18/L25 subcomplex. Contacts the 5S rRNA and the P site tRNA. Forms a bridge to the 30S subunit in the 70S ribosome.</text>
</comment>
<comment type="similarity">
    <text evidence="1">Belongs to the universal ribosomal protein uL5 family.</text>
</comment>
<keyword id="KW-0687">Ribonucleoprotein</keyword>
<keyword id="KW-0689">Ribosomal protein</keyword>
<keyword id="KW-0694">RNA-binding</keyword>
<keyword id="KW-0699">rRNA-binding</keyword>
<keyword id="KW-0820">tRNA-binding</keyword>
<reference key="1">
    <citation type="journal article" date="2008" name="BMC Genomics">
        <title>The genome sequence of the fish pathogen Aliivibrio salmonicida strain LFI1238 shows extensive evidence of gene decay.</title>
        <authorList>
            <person name="Hjerde E."/>
            <person name="Lorentzen M.S."/>
            <person name="Holden M.T."/>
            <person name="Seeger K."/>
            <person name="Paulsen S."/>
            <person name="Bason N."/>
            <person name="Churcher C."/>
            <person name="Harris D."/>
            <person name="Norbertczak H."/>
            <person name="Quail M.A."/>
            <person name="Sanders S."/>
            <person name="Thurston S."/>
            <person name="Parkhill J."/>
            <person name="Willassen N.P."/>
            <person name="Thomson N.R."/>
        </authorList>
    </citation>
    <scope>NUCLEOTIDE SEQUENCE [LARGE SCALE GENOMIC DNA]</scope>
    <source>
        <strain>LFI1238</strain>
    </source>
</reference>
<organism>
    <name type="scientific">Aliivibrio salmonicida (strain LFI1238)</name>
    <name type="common">Vibrio salmonicida (strain LFI1238)</name>
    <dbReference type="NCBI Taxonomy" id="316275"/>
    <lineage>
        <taxon>Bacteria</taxon>
        <taxon>Pseudomonadati</taxon>
        <taxon>Pseudomonadota</taxon>
        <taxon>Gammaproteobacteria</taxon>
        <taxon>Vibrionales</taxon>
        <taxon>Vibrionaceae</taxon>
        <taxon>Aliivibrio</taxon>
    </lineage>
</organism>
<dbReference type="EMBL" id="FM178379">
    <property type="protein sequence ID" value="CAQ78017.1"/>
    <property type="molecule type" value="Genomic_DNA"/>
</dbReference>
<dbReference type="RefSeq" id="WP_012549161.1">
    <property type="nucleotide sequence ID" value="NC_011312.1"/>
</dbReference>
<dbReference type="SMR" id="B6EPT7"/>
<dbReference type="KEGG" id="vsa:VSAL_I0332"/>
<dbReference type="eggNOG" id="COG0094">
    <property type="taxonomic scope" value="Bacteria"/>
</dbReference>
<dbReference type="HOGENOM" id="CLU_061015_2_1_6"/>
<dbReference type="Proteomes" id="UP000001730">
    <property type="component" value="Chromosome 1"/>
</dbReference>
<dbReference type="GO" id="GO:1990904">
    <property type="term" value="C:ribonucleoprotein complex"/>
    <property type="evidence" value="ECO:0007669"/>
    <property type="project" value="UniProtKB-KW"/>
</dbReference>
<dbReference type="GO" id="GO:0005840">
    <property type="term" value="C:ribosome"/>
    <property type="evidence" value="ECO:0007669"/>
    <property type="project" value="UniProtKB-KW"/>
</dbReference>
<dbReference type="GO" id="GO:0019843">
    <property type="term" value="F:rRNA binding"/>
    <property type="evidence" value="ECO:0007669"/>
    <property type="project" value="UniProtKB-UniRule"/>
</dbReference>
<dbReference type="GO" id="GO:0003735">
    <property type="term" value="F:structural constituent of ribosome"/>
    <property type="evidence" value="ECO:0007669"/>
    <property type="project" value="InterPro"/>
</dbReference>
<dbReference type="GO" id="GO:0000049">
    <property type="term" value="F:tRNA binding"/>
    <property type="evidence" value="ECO:0007669"/>
    <property type="project" value="UniProtKB-UniRule"/>
</dbReference>
<dbReference type="GO" id="GO:0006412">
    <property type="term" value="P:translation"/>
    <property type="evidence" value="ECO:0007669"/>
    <property type="project" value="UniProtKB-UniRule"/>
</dbReference>
<dbReference type="FunFam" id="3.30.1440.10:FF:000001">
    <property type="entry name" value="50S ribosomal protein L5"/>
    <property type="match status" value="1"/>
</dbReference>
<dbReference type="Gene3D" id="3.30.1440.10">
    <property type="match status" value="1"/>
</dbReference>
<dbReference type="HAMAP" id="MF_01333_B">
    <property type="entry name" value="Ribosomal_uL5_B"/>
    <property type="match status" value="1"/>
</dbReference>
<dbReference type="InterPro" id="IPR002132">
    <property type="entry name" value="Ribosomal_uL5"/>
</dbReference>
<dbReference type="InterPro" id="IPR020930">
    <property type="entry name" value="Ribosomal_uL5_bac-type"/>
</dbReference>
<dbReference type="InterPro" id="IPR031309">
    <property type="entry name" value="Ribosomal_uL5_C"/>
</dbReference>
<dbReference type="InterPro" id="IPR020929">
    <property type="entry name" value="Ribosomal_uL5_CS"/>
</dbReference>
<dbReference type="InterPro" id="IPR022803">
    <property type="entry name" value="Ribosomal_uL5_dom_sf"/>
</dbReference>
<dbReference type="InterPro" id="IPR031310">
    <property type="entry name" value="Ribosomal_uL5_N"/>
</dbReference>
<dbReference type="NCBIfam" id="NF000585">
    <property type="entry name" value="PRK00010.1"/>
    <property type="match status" value="1"/>
</dbReference>
<dbReference type="PANTHER" id="PTHR11994">
    <property type="entry name" value="60S RIBOSOMAL PROTEIN L11-RELATED"/>
    <property type="match status" value="1"/>
</dbReference>
<dbReference type="Pfam" id="PF00281">
    <property type="entry name" value="Ribosomal_L5"/>
    <property type="match status" value="1"/>
</dbReference>
<dbReference type="Pfam" id="PF00673">
    <property type="entry name" value="Ribosomal_L5_C"/>
    <property type="match status" value="1"/>
</dbReference>
<dbReference type="PIRSF" id="PIRSF002161">
    <property type="entry name" value="Ribosomal_L5"/>
    <property type="match status" value="1"/>
</dbReference>
<dbReference type="SUPFAM" id="SSF55282">
    <property type="entry name" value="RL5-like"/>
    <property type="match status" value="1"/>
</dbReference>
<dbReference type="PROSITE" id="PS00358">
    <property type="entry name" value="RIBOSOMAL_L5"/>
    <property type="match status" value="1"/>
</dbReference>